<protein>
    <recommendedName>
        <fullName>Probable G-protein coupled receptor 139</fullName>
    </recommendedName>
    <alternativeName>
        <fullName>G(q)-coupled orphan receptor GPRg1</fullName>
    </alternativeName>
    <alternativeName>
        <fullName>G-protein-coupled receptor PGR3</fullName>
    </alternativeName>
</protein>
<accession>Q6DWJ6</accession>
<accession>A8K5R9</accession>
<accession>Q86SP2</accession>
<accession>Q8TDU8</accession>
<proteinExistence type="evidence at protein level"/>
<comment type="function">
    <text>Orphan receptor. Seems to act through a G(q/11)-mediated pathway.</text>
</comment>
<comment type="subcellular location">
    <subcellularLocation>
        <location>Cell membrane</location>
        <topology>Multi-pass membrane protein</topology>
    </subcellularLocation>
</comment>
<comment type="tissue specificity">
    <text evidence="3">Expressed almost exclusively in the brain. Detected at very low levels in the peripheral tissues.</text>
</comment>
<comment type="similarity">
    <text evidence="2">Belongs to the G-protein coupled receptor 1 family.</text>
</comment>
<comment type="sequence caution" evidence="4">
    <conflict type="erroneous gene model prediction">
        <sequence resource="EMBL-CDS" id="BAB89307"/>
    </conflict>
</comment>
<sequence>MEHTHAHLAANSSLSWWSPGSACGLGFVPVVYYSLLLCLGLPANILTVIILSQLVARRQKSSYNYLLALAAADILVLFFIVFVDFLLEDFILNMQMPQVPDKIIEVLEFSSIHTSIWITVPLTIDRYIAVCHPLKYHTVSYPARTRKVIVSVYITCFLTSIPYYWWPNIWTEDYISTSVHHVLIWIHCFTVYLVPCSIFFILNSIIVYKLRRKSNFRLRGYSTGKTTAILFTITSIFATLWAPRIIMILYHLYGAPIQNRWLVHIMSDIANMLALLNTAINFFLYCFISKRFRTMAAATLKAFFKCQKQPVQFYTNHNFSITSSPWISPANSHCIKMLVYQYDKNGKPIKVSP</sequence>
<evidence type="ECO:0000255" key="1"/>
<evidence type="ECO:0000255" key="2">
    <source>
        <dbReference type="PROSITE-ProRule" id="PRU00521"/>
    </source>
</evidence>
<evidence type="ECO:0000269" key="3">
    <source>
    </source>
</evidence>
<evidence type="ECO:0000305" key="4"/>
<evidence type="ECO:0007829" key="5">
    <source>
        <dbReference type="PDB" id="7VUG"/>
    </source>
</evidence>
<evidence type="ECO:0007829" key="6">
    <source>
        <dbReference type="PDB" id="7VUH"/>
    </source>
</evidence>
<reference key="1">
    <citation type="submission" date="2004-05" db="EMBL/GenBank/DDBJ databases">
        <title>Complete coding sequence of GPR139.</title>
        <authorList>
            <person name="Bonner T.I."/>
            <person name="Nagle J.W."/>
            <person name="Kauffman D."/>
        </authorList>
    </citation>
    <scope>NUCLEOTIDE SEQUENCE [MRNA]</scope>
    <source>
        <tissue>Brain</tissue>
    </source>
</reference>
<reference key="2">
    <citation type="journal article" date="2005" name="Biochem. Biophys. Res. Commun.">
        <title>Molecular cloning and characterization of a novel Gq-coupled orphan receptor GPRg1 exclusively expressed in the central nervous system.</title>
        <authorList>
            <person name="Matsuo A."/>
            <person name="Matsumoto S."/>
            <person name="Nagano M."/>
            <person name="Masumoto K.H."/>
            <person name="Takasaki J."/>
            <person name="Matsumoto M."/>
            <person name="Kobori M."/>
            <person name="Katoh M."/>
            <person name="Shigeyoshi Y."/>
        </authorList>
    </citation>
    <scope>NUCLEOTIDE SEQUENCE [MRNA]</scope>
    <scope>TISSUE SPECIFICITY</scope>
</reference>
<reference key="3">
    <citation type="journal article" date="2002" name="FEBS Lett.">
        <title>Identification of G protein-coupled receptor genes from the human genome sequence.</title>
        <authorList>
            <person name="Takeda S."/>
            <person name="Kadowaki S."/>
            <person name="Haga T."/>
            <person name="Takaesu H."/>
            <person name="Mitaku S."/>
        </authorList>
    </citation>
    <scope>NUCLEOTIDE SEQUENCE [LARGE SCALE GENOMIC DNA]</scope>
</reference>
<reference key="4">
    <citation type="journal article" date="2004" name="Nat. Genet.">
        <title>Complete sequencing and characterization of 21,243 full-length human cDNAs.</title>
        <authorList>
            <person name="Ota T."/>
            <person name="Suzuki Y."/>
            <person name="Nishikawa T."/>
            <person name="Otsuki T."/>
            <person name="Sugiyama T."/>
            <person name="Irie R."/>
            <person name="Wakamatsu A."/>
            <person name="Hayashi K."/>
            <person name="Sato H."/>
            <person name="Nagai K."/>
            <person name="Kimura K."/>
            <person name="Makita H."/>
            <person name="Sekine M."/>
            <person name="Obayashi M."/>
            <person name="Nishi T."/>
            <person name="Shibahara T."/>
            <person name="Tanaka T."/>
            <person name="Ishii S."/>
            <person name="Yamamoto J."/>
            <person name="Saito K."/>
            <person name="Kawai Y."/>
            <person name="Isono Y."/>
            <person name="Nakamura Y."/>
            <person name="Nagahari K."/>
            <person name="Murakami K."/>
            <person name="Yasuda T."/>
            <person name="Iwayanagi T."/>
            <person name="Wagatsuma M."/>
            <person name="Shiratori A."/>
            <person name="Sudo H."/>
            <person name="Hosoiri T."/>
            <person name="Kaku Y."/>
            <person name="Kodaira H."/>
            <person name="Kondo H."/>
            <person name="Sugawara M."/>
            <person name="Takahashi M."/>
            <person name="Kanda K."/>
            <person name="Yokoi T."/>
            <person name="Furuya T."/>
            <person name="Kikkawa E."/>
            <person name="Omura Y."/>
            <person name="Abe K."/>
            <person name="Kamihara K."/>
            <person name="Katsuta N."/>
            <person name="Sato K."/>
            <person name="Tanikawa M."/>
            <person name="Yamazaki M."/>
            <person name="Ninomiya K."/>
            <person name="Ishibashi T."/>
            <person name="Yamashita H."/>
            <person name="Murakawa K."/>
            <person name="Fujimori K."/>
            <person name="Tanai H."/>
            <person name="Kimata M."/>
            <person name="Watanabe M."/>
            <person name="Hiraoka S."/>
            <person name="Chiba Y."/>
            <person name="Ishida S."/>
            <person name="Ono Y."/>
            <person name="Takiguchi S."/>
            <person name="Watanabe S."/>
            <person name="Yosida M."/>
            <person name="Hotuta T."/>
            <person name="Kusano J."/>
            <person name="Kanehori K."/>
            <person name="Takahashi-Fujii A."/>
            <person name="Hara H."/>
            <person name="Tanase T.-O."/>
            <person name="Nomura Y."/>
            <person name="Togiya S."/>
            <person name="Komai F."/>
            <person name="Hara R."/>
            <person name="Takeuchi K."/>
            <person name="Arita M."/>
            <person name="Imose N."/>
            <person name="Musashino K."/>
            <person name="Yuuki H."/>
            <person name="Oshima A."/>
            <person name="Sasaki N."/>
            <person name="Aotsuka S."/>
            <person name="Yoshikawa Y."/>
            <person name="Matsunawa H."/>
            <person name="Ichihara T."/>
            <person name="Shiohata N."/>
            <person name="Sano S."/>
            <person name="Moriya S."/>
            <person name="Momiyama H."/>
            <person name="Satoh N."/>
            <person name="Takami S."/>
            <person name="Terashima Y."/>
            <person name="Suzuki O."/>
            <person name="Nakagawa S."/>
            <person name="Senoh A."/>
            <person name="Mizoguchi H."/>
            <person name="Goto Y."/>
            <person name="Shimizu F."/>
            <person name="Wakebe H."/>
            <person name="Hishigaki H."/>
            <person name="Watanabe T."/>
            <person name="Sugiyama A."/>
            <person name="Takemoto M."/>
            <person name="Kawakami B."/>
            <person name="Yamazaki M."/>
            <person name="Watanabe K."/>
            <person name="Kumagai A."/>
            <person name="Itakura S."/>
            <person name="Fukuzumi Y."/>
            <person name="Fujimori Y."/>
            <person name="Komiyama M."/>
            <person name="Tashiro H."/>
            <person name="Tanigami A."/>
            <person name="Fujiwara T."/>
            <person name="Ono T."/>
            <person name="Yamada K."/>
            <person name="Fujii Y."/>
            <person name="Ozaki K."/>
            <person name="Hirao M."/>
            <person name="Ohmori Y."/>
            <person name="Kawabata A."/>
            <person name="Hikiji T."/>
            <person name="Kobatake N."/>
            <person name="Inagaki H."/>
            <person name="Ikema Y."/>
            <person name="Okamoto S."/>
            <person name="Okitani R."/>
            <person name="Kawakami T."/>
            <person name="Noguchi S."/>
            <person name="Itoh T."/>
            <person name="Shigeta K."/>
            <person name="Senba T."/>
            <person name="Matsumura K."/>
            <person name="Nakajima Y."/>
            <person name="Mizuno T."/>
            <person name="Morinaga M."/>
            <person name="Sasaki M."/>
            <person name="Togashi T."/>
            <person name="Oyama M."/>
            <person name="Hata H."/>
            <person name="Watanabe M."/>
            <person name="Komatsu T."/>
            <person name="Mizushima-Sugano J."/>
            <person name="Satoh T."/>
            <person name="Shirai Y."/>
            <person name="Takahashi Y."/>
            <person name="Nakagawa K."/>
            <person name="Okumura K."/>
            <person name="Nagase T."/>
            <person name="Nomura N."/>
            <person name="Kikuchi H."/>
            <person name="Masuho Y."/>
            <person name="Yamashita R."/>
            <person name="Nakai K."/>
            <person name="Yada T."/>
            <person name="Nakamura Y."/>
            <person name="Ohara O."/>
            <person name="Isogai T."/>
            <person name="Sugano S."/>
        </authorList>
    </citation>
    <scope>NUCLEOTIDE SEQUENCE [LARGE SCALE MRNA]</scope>
    <source>
        <tissue>Brain</tissue>
    </source>
</reference>
<reference key="5">
    <citation type="submission" date="2005-07" db="EMBL/GenBank/DDBJ databases">
        <authorList>
            <person name="Mural R.J."/>
            <person name="Istrail S."/>
            <person name="Sutton G."/>
            <person name="Florea L."/>
            <person name="Halpern A.L."/>
            <person name="Mobarry C.M."/>
            <person name="Lippert R."/>
            <person name="Walenz B."/>
            <person name="Shatkay H."/>
            <person name="Dew I."/>
            <person name="Miller J.R."/>
            <person name="Flanigan M.J."/>
            <person name="Edwards N.J."/>
            <person name="Bolanos R."/>
            <person name="Fasulo D."/>
            <person name="Halldorsson B.V."/>
            <person name="Hannenhalli S."/>
            <person name="Turner R."/>
            <person name="Yooseph S."/>
            <person name="Lu F."/>
            <person name="Nusskern D.R."/>
            <person name="Shue B.C."/>
            <person name="Zheng X.H."/>
            <person name="Zhong F."/>
            <person name="Delcher A.L."/>
            <person name="Huson D.H."/>
            <person name="Kravitz S.A."/>
            <person name="Mouchard L."/>
            <person name="Reinert K."/>
            <person name="Remington K.A."/>
            <person name="Clark A.G."/>
            <person name="Waterman M.S."/>
            <person name="Eichler E.E."/>
            <person name="Adams M.D."/>
            <person name="Hunkapiller M.W."/>
            <person name="Myers E.W."/>
            <person name="Venter J.C."/>
        </authorList>
    </citation>
    <scope>NUCLEOTIDE SEQUENCE [LARGE SCALE GENOMIC DNA]</scope>
</reference>
<reference key="6">
    <citation type="journal article" date="2004" name="Genome Res.">
        <title>The status, quality, and expansion of the NIH full-length cDNA project: the Mammalian Gene Collection (MGC).</title>
        <authorList>
            <consortium name="The MGC Project Team"/>
        </authorList>
    </citation>
    <scope>NUCLEOTIDE SEQUENCE [LARGE SCALE MRNA]</scope>
</reference>
<reference key="7">
    <citation type="journal article" date="2003" name="Proc. Natl. Acad. Sci. U.S.A.">
        <title>The G protein-coupled receptor repertoires of human and mouse.</title>
        <authorList>
            <person name="Vassilatis D.K."/>
            <person name="Hohmann J.G."/>
            <person name="Zeng H."/>
            <person name="Li F."/>
            <person name="Ranchalis J.E."/>
            <person name="Mortrud M.T."/>
            <person name="Brown A."/>
            <person name="Rodriguez S.S."/>
            <person name="Weller J.R."/>
            <person name="Wright A.C."/>
            <person name="Bergmann J.E."/>
            <person name="Gaitanaris G.A."/>
        </authorList>
    </citation>
    <scope>NUCLEOTIDE SEQUENCE [MRNA] OF 168-353</scope>
</reference>
<keyword id="KW-0002">3D-structure</keyword>
<keyword id="KW-1003">Cell membrane</keyword>
<keyword id="KW-0297">G-protein coupled receptor</keyword>
<keyword id="KW-0325">Glycoprotein</keyword>
<keyword id="KW-0472">Membrane</keyword>
<keyword id="KW-0675">Receptor</keyword>
<keyword id="KW-1185">Reference proteome</keyword>
<keyword id="KW-0807">Transducer</keyword>
<keyword id="KW-0812">Transmembrane</keyword>
<keyword id="KW-1133">Transmembrane helix</keyword>
<organism>
    <name type="scientific">Homo sapiens</name>
    <name type="common">Human</name>
    <dbReference type="NCBI Taxonomy" id="9606"/>
    <lineage>
        <taxon>Eukaryota</taxon>
        <taxon>Metazoa</taxon>
        <taxon>Chordata</taxon>
        <taxon>Craniata</taxon>
        <taxon>Vertebrata</taxon>
        <taxon>Euteleostomi</taxon>
        <taxon>Mammalia</taxon>
        <taxon>Eutheria</taxon>
        <taxon>Euarchontoglires</taxon>
        <taxon>Primates</taxon>
        <taxon>Haplorrhini</taxon>
        <taxon>Catarrhini</taxon>
        <taxon>Hominidae</taxon>
        <taxon>Homo</taxon>
    </lineage>
</organism>
<feature type="chain" id="PRO_0000069615" description="Probable G-protein coupled receptor 139">
    <location>
        <begin position="1"/>
        <end position="353"/>
    </location>
</feature>
<feature type="topological domain" description="Extracellular" evidence="1">
    <location>
        <begin position="1"/>
        <end position="29"/>
    </location>
</feature>
<feature type="transmembrane region" description="Helical; Name=1" evidence="1">
    <location>
        <begin position="30"/>
        <end position="50"/>
    </location>
</feature>
<feature type="topological domain" description="Cytoplasmic" evidence="1">
    <location>
        <begin position="51"/>
        <end position="65"/>
    </location>
</feature>
<feature type="transmembrane region" description="Helical; Name=2" evidence="1">
    <location>
        <begin position="66"/>
        <end position="86"/>
    </location>
</feature>
<feature type="topological domain" description="Extracellular" evidence="1">
    <location>
        <begin position="87"/>
        <end position="102"/>
    </location>
</feature>
<feature type="transmembrane region" description="Helical; Name=3" evidence="1">
    <location>
        <begin position="103"/>
        <end position="123"/>
    </location>
</feature>
<feature type="topological domain" description="Cytoplasmic" evidence="1">
    <location>
        <begin position="124"/>
        <end position="148"/>
    </location>
</feature>
<feature type="transmembrane region" description="Helical; Name=4" evidence="1">
    <location>
        <begin position="149"/>
        <end position="169"/>
    </location>
</feature>
<feature type="topological domain" description="Extracellular" evidence="1">
    <location>
        <begin position="170"/>
        <end position="181"/>
    </location>
</feature>
<feature type="transmembrane region" description="Helical; Name=5" evidence="1">
    <location>
        <begin position="182"/>
        <end position="202"/>
    </location>
</feature>
<feature type="topological domain" description="Cytoplasmic" evidence="1">
    <location>
        <begin position="203"/>
        <end position="228"/>
    </location>
</feature>
<feature type="transmembrane region" description="Helical; Name=6" evidence="1">
    <location>
        <begin position="229"/>
        <end position="249"/>
    </location>
</feature>
<feature type="topological domain" description="Extracellular" evidence="1">
    <location>
        <begin position="250"/>
        <end position="268"/>
    </location>
</feature>
<feature type="transmembrane region" description="Helical; Name=7" evidence="1">
    <location>
        <begin position="269"/>
        <end position="289"/>
    </location>
</feature>
<feature type="topological domain" description="Cytoplasmic" evidence="1">
    <location>
        <begin position="290"/>
        <end position="353"/>
    </location>
</feature>
<feature type="glycosylation site" description="N-linked (GlcNAc...) asparagine" evidence="1">
    <location>
        <position position="11"/>
    </location>
</feature>
<feature type="helix" evidence="5">
    <location>
        <begin position="24"/>
        <end position="26"/>
    </location>
</feature>
<feature type="helix" evidence="5">
    <location>
        <begin position="27"/>
        <end position="51"/>
    </location>
</feature>
<feature type="helix" evidence="5">
    <location>
        <begin position="54"/>
        <end position="57"/>
    </location>
</feature>
<feature type="helix" evidence="5">
    <location>
        <begin position="61"/>
        <end position="80"/>
    </location>
</feature>
<feature type="turn" evidence="5">
    <location>
        <begin position="81"/>
        <end position="83"/>
    </location>
</feature>
<feature type="helix" evidence="5">
    <location>
        <begin position="84"/>
        <end position="87"/>
    </location>
</feature>
<feature type="turn" evidence="5">
    <location>
        <begin position="88"/>
        <end position="91"/>
    </location>
</feature>
<feature type="turn" evidence="5">
    <location>
        <begin position="97"/>
        <end position="99"/>
    </location>
</feature>
<feature type="helix" evidence="5">
    <location>
        <begin position="100"/>
        <end position="131"/>
    </location>
</feature>
<feature type="helix" evidence="5">
    <location>
        <begin position="133"/>
        <end position="135"/>
    </location>
</feature>
<feature type="helix" evidence="5">
    <location>
        <begin position="136"/>
        <end position="139"/>
    </location>
</feature>
<feature type="helix" evidence="5">
    <location>
        <begin position="142"/>
        <end position="159"/>
    </location>
</feature>
<feature type="helix" evidence="5">
    <location>
        <begin position="161"/>
        <end position="165"/>
    </location>
</feature>
<feature type="turn" evidence="6">
    <location>
        <begin position="169"/>
        <end position="173"/>
    </location>
</feature>
<feature type="helix" evidence="5">
    <location>
        <begin position="178"/>
        <end position="191"/>
    </location>
</feature>
<feature type="helix" evidence="5">
    <location>
        <begin position="193"/>
        <end position="211"/>
    </location>
</feature>
<feature type="helix" evidence="5">
    <location>
        <begin position="221"/>
        <end position="241"/>
    </location>
</feature>
<feature type="helix" evidence="5">
    <location>
        <begin position="243"/>
        <end position="253"/>
    </location>
</feature>
<feature type="strand" evidence="6">
    <location>
        <begin position="256"/>
        <end position="258"/>
    </location>
</feature>
<feature type="helix" evidence="5">
    <location>
        <begin position="260"/>
        <end position="286"/>
    </location>
</feature>
<feature type="helix" evidence="5">
    <location>
        <begin position="290"/>
        <end position="303"/>
    </location>
</feature>
<gene>
    <name type="primary">GPR139</name>
    <name type="synonym">GPRG1</name>
    <name type="synonym">PGR3</name>
</gene>
<name>GP139_HUMAN</name>
<dbReference type="EMBL" id="AY635179">
    <property type="protein sequence ID" value="AAT65818.1"/>
    <property type="molecule type" value="mRNA"/>
</dbReference>
<dbReference type="EMBL" id="AB196529">
    <property type="protein sequence ID" value="BAD97440.1"/>
    <property type="molecule type" value="mRNA"/>
</dbReference>
<dbReference type="EMBL" id="AB083594">
    <property type="protein sequence ID" value="BAB89307.1"/>
    <property type="status" value="ALT_SEQ"/>
    <property type="molecule type" value="Genomic_DNA"/>
</dbReference>
<dbReference type="EMBL" id="AK291384">
    <property type="protein sequence ID" value="BAF84073.1"/>
    <property type="molecule type" value="mRNA"/>
</dbReference>
<dbReference type="EMBL" id="CH471186">
    <property type="protein sequence ID" value="EAW50306.1"/>
    <property type="molecule type" value="Genomic_DNA"/>
</dbReference>
<dbReference type="EMBL" id="BC137237">
    <property type="protein sequence ID" value="AAI37238.1"/>
    <property type="molecule type" value="mRNA"/>
</dbReference>
<dbReference type="EMBL" id="BC137238">
    <property type="protein sequence ID" value="AAI37239.1"/>
    <property type="molecule type" value="mRNA"/>
</dbReference>
<dbReference type="EMBL" id="AY255545">
    <property type="protein sequence ID" value="AAO85057.1"/>
    <property type="molecule type" value="mRNA"/>
</dbReference>
<dbReference type="CCDS" id="CCDS32398.1"/>
<dbReference type="RefSeq" id="NP_001002911.1">
    <property type="nucleotide sequence ID" value="NM_001002911.4"/>
</dbReference>
<dbReference type="RefSeq" id="NP_001305412.1">
    <property type="nucleotide sequence ID" value="NM_001318483.1"/>
</dbReference>
<dbReference type="PDB" id="7VUG">
    <property type="method" value="EM"/>
    <property type="resolution" value="3.20 A"/>
    <property type="chains" value="R=2-321"/>
</dbReference>
<dbReference type="PDB" id="7VUH">
    <property type="method" value="EM"/>
    <property type="resolution" value="3.22 A"/>
    <property type="chains" value="R=2-321"/>
</dbReference>
<dbReference type="PDB" id="7VUI">
    <property type="method" value="EM"/>
    <property type="resolution" value="3.30 A"/>
    <property type="chains" value="R=2-321"/>
</dbReference>
<dbReference type="PDB" id="7VUJ">
    <property type="method" value="EM"/>
    <property type="resolution" value="3.80 A"/>
    <property type="chains" value="R=2-321"/>
</dbReference>
<dbReference type="PDBsum" id="7VUG"/>
<dbReference type="PDBsum" id="7VUH"/>
<dbReference type="PDBsum" id="7VUI"/>
<dbReference type="PDBsum" id="7VUJ"/>
<dbReference type="EMDB" id="EMD-32127"/>
<dbReference type="EMDB" id="EMD-32128"/>
<dbReference type="EMDB" id="EMD-32129"/>
<dbReference type="EMDB" id="EMD-32130"/>
<dbReference type="SMR" id="Q6DWJ6"/>
<dbReference type="BioGRID" id="125859">
    <property type="interactions" value="16"/>
</dbReference>
<dbReference type="FunCoup" id="Q6DWJ6">
    <property type="interactions" value="642"/>
</dbReference>
<dbReference type="STRING" id="9606.ENSP00000458791"/>
<dbReference type="BindingDB" id="Q6DWJ6"/>
<dbReference type="ChEMBL" id="CHEMBL3632455"/>
<dbReference type="DrugCentral" id="Q6DWJ6"/>
<dbReference type="GuidetoPHARMACOLOGY" id="130"/>
<dbReference type="TCDB" id="9.A.14.13.25">
    <property type="family name" value="the g-protein-coupled receptor (gpcr) family"/>
</dbReference>
<dbReference type="GlyCosmos" id="Q6DWJ6">
    <property type="glycosylation" value="1 site, No reported glycans"/>
</dbReference>
<dbReference type="GlyGen" id="Q6DWJ6">
    <property type="glycosylation" value="1 site"/>
</dbReference>
<dbReference type="iPTMnet" id="Q6DWJ6"/>
<dbReference type="PhosphoSitePlus" id="Q6DWJ6"/>
<dbReference type="BioMuta" id="GPR139"/>
<dbReference type="DMDM" id="74762300"/>
<dbReference type="PaxDb" id="9606-ENSP00000458791"/>
<dbReference type="PeptideAtlas" id="Q6DWJ6"/>
<dbReference type="Antibodypedia" id="12144">
    <property type="antibodies" value="149 antibodies from 30 providers"/>
</dbReference>
<dbReference type="DNASU" id="124274"/>
<dbReference type="Ensembl" id="ENST00000570682.2">
    <property type="protein sequence ID" value="ENSP00000458791.2"/>
    <property type="gene ID" value="ENSG00000180269.8"/>
</dbReference>
<dbReference type="GeneID" id="124274"/>
<dbReference type="KEGG" id="hsa:124274"/>
<dbReference type="MANE-Select" id="ENST00000570682.2">
    <property type="protein sequence ID" value="ENSP00000458791.2"/>
    <property type="RefSeq nucleotide sequence ID" value="NM_001002911.4"/>
    <property type="RefSeq protein sequence ID" value="NP_001002911.1"/>
</dbReference>
<dbReference type="UCSC" id="uc002dgu.2">
    <property type="organism name" value="human"/>
</dbReference>
<dbReference type="AGR" id="HGNC:19995"/>
<dbReference type="CTD" id="124274"/>
<dbReference type="DisGeNET" id="124274"/>
<dbReference type="GeneCards" id="GPR139"/>
<dbReference type="HGNC" id="HGNC:19995">
    <property type="gene designation" value="GPR139"/>
</dbReference>
<dbReference type="HPA" id="ENSG00000180269">
    <property type="expression patterns" value="Not detected"/>
</dbReference>
<dbReference type="MIM" id="618448">
    <property type="type" value="gene"/>
</dbReference>
<dbReference type="neXtProt" id="NX_Q6DWJ6"/>
<dbReference type="OpenTargets" id="ENSG00000180269"/>
<dbReference type="PharmGKB" id="PA134970866"/>
<dbReference type="VEuPathDB" id="HostDB:ENSG00000180269"/>
<dbReference type="eggNOG" id="KOG3656">
    <property type="taxonomic scope" value="Eukaryota"/>
</dbReference>
<dbReference type="GeneTree" id="ENSGT00940000159473"/>
<dbReference type="HOGENOM" id="CLU_009579_24_1_1"/>
<dbReference type="InParanoid" id="Q6DWJ6"/>
<dbReference type="OMA" id="WLVHIVS"/>
<dbReference type="OrthoDB" id="5864054at2759"/>
<dbReference type="PAN-GO" id="Q6DWJ6">
    <property type="GO annotations" value="2 GO annotations based on evolutionary models"/>
</dbReference>
<dbReference type="PhylomeDB" id="Q6DWJ6"/>
<dbReference type="TreeFam" id="TF334275"/>
<dbReference type="PathwayCommons" id="Q6DWJ6"/>
<dbReference type="BioGRID-ORCS" id="124274">
    <property type="hits" value="4 hits in 1135 CRISPR screens"/>
</dbReference>
<dbReference type="ChiTaRS" id="GPR139">
    <property type="organism name" value="human"/>
</dbReference>
<dbReference type="GeneWiki" id="GPR139"/>
<dbReference type="GenomeRNAi" id="124274"/>
<dbReference type="Pharos" id="Q6DWJ6">
    <property type="development level" value="Tchem"/>
</dbReference>
<dbReference type="PRO" id="PR:Q6DWJ6"/>
<dbReference type="Proteomes" id="UP000005640">
    <property type="component" value="Chromosome 16"/>
</dbReference>
<dbReference type="RNAct" id="Q6DWJ6">
    <property type="molecule type" value="protein"/>
</dbReference>
<dbReference type="Bgee" id="ENSG00000180269">
    <property type="expression patterns" value="Expressed in cortical plate and 14 other cell types or tissues"/>
</dbReference>
<dbReference type="ExpressionAtlas" id="Q6DWJ6">
    <property type="expression patterns" value="baseline and differential"/>
</dbReference>
<dbReference type="GO" id="GO:0005886">
    <property type="term" value="C:plasma membrane"/>
    <property type="evidence" value="ECO:0000318"/>
    <property type="project" value="GO_Central"/>
</dbReference>
<dbReference type="GO" id="GO:0042802">
    <property type="term" value="F:identical protein binding"/>
    <property type="evidence" value="ECO:0007669"/>
    <property type="project" value="Ensembl"/>
</dbReference>
<dbReference type="GO" id="GO:0008188">
    <property type="term" value="F:neuropeptide receptor activity"/>
    <property type="evidence" value="ECO:0007669"/>
    <property type="project" value="Ensembl"/>
</dbReference>
<dbReference type="GO" id="GO:0007186">
    <property type="term" value="P:G protein-coupled receptor signaling pathway"/>
    <property type="evidence" value="ECO:0000314"/>
    <property type="project" value="MGI"/>
</dbReference>
<dbReference type="GO" id="GO:0007200">
    <property type="term" value="P:phospholipase C-activating G protein-coupled receptor signaling pathway"/>
    <property type="evidence" value="ECO:0000318"/>
    <property type="project" value="GO_Central"/>
</dbReference>
<dbReference type="CDD" id="cd15919">
    <property type="entry name" value="7tmA_GPR139"/>
    <property type="match status" value="1"/>
</dbReference>
<dbReference type="FunFam" id="1.20.1070.10:FF:000126">
    <property type="entry name" value="Probable G-protein coupled receptor 139"/>
    <property type="match status" value="1"/>
</dbReference>
<dbReference type="Gene3D" id="1.20.1070.10">
    <property type="entry name" value="Rhodopsin 7-helix transmembrane proteins"/>
    <property type="match status" value="1"/>
</dbReference>
<dbReference type="InterPro" id="IPR000276">
    <property type="entry name" value="GPCR_Rhodpsn"/>
</dbReference>
<dbReference type="InterPro" id="IPR017452">
    <property type="entry name" value="GPCR_Rhodpsn_7TM"/>
</dbReference>
<dbReference type="InterPro" id="IPR037486">
    <property type="entry name" value="GPR139"/>
</dbReference>
<dbReference type="InterPro" id="IPR052477">
    <property type="entry name" value="Orphan_GPCR1"/>
</dbReference>
<dbReference type="PANTHER" id="PTHR46272:SF3">
    <property type="entry name" value="G-PROTEIN COUPLED RECEPTOR 139-RELATED"/>
    <property type="match status" value="1"/>
</dbReference>
<dbReference type="PANTHER" id="PTHR46272">
    <property type="entry name" value="G_PROTEIN_RECEP_F1_2 DOMAIN-CONTAINING PROTEIN"/>
    <property type="match status" value="1"/>
</dbReference>
<dbReference type="Pfam" id="PF00001">
    <property type="entry name" value="7tm_1"/>
    <property type="match status" value="1"/>
</dbReference>
<dbReference type="PRINTS" id="PR00237">
    <property type="entry name" value="GPCRRHODOPSN"/>
</dbReference>
<dbReference type="SUPFAM" id="SSF81321">
    <property type="entry name" value="Family A G protein-coupled receptor-like"/>
    <property type="match status" value="1"/>
</dbReference>
<dbReference type="PROSITE" id="PS50262">
    <property type="entry name" value="G_PROTEIN_RECEP_F1_2"/>
    <property type="match status" value="1"/>
</dbReference>